<gene>
    <name evidence="1" type="primary">hemL</name>
    <name type="ordered locus">NGO_0040</name>
</gene>
<proteinExistence type="inferred from homology"/>
<name>GSA_NEIG1</name>
<protein>
    <recommendedName>
        <fullName evidence="1">Glutamate-1-semialdehyde 2,1-aminomutase</fullName>
        <shortName evidence="1">GSA</shortName>
        <ecNumber evidence="1">5.4.3.8</ecNumber>
    </recommendedName>
    <alternativeName>
        <fullName evidence="1">Glutamate-1-semialdehyde aminotransferase</fullName>
        <shortName evidence="1">GSA-AT</shortName>
    </alternativeName>
</protein>
<dbReference type="EC" id="5.4.3.8" evidence="1"/>
<dbReference type="EMBL" id="AE004969">
    <property type="protein sequence ID" value="AAW88808.1"/>
    <property type="molecule type" value="Genomic_DNA"/>
</dbReference>
<dbReference type="RefSeq" id="WP_003687258.1">
    <property type="nucleotide sequence ID" value="NC_002946.2"/>
</dbReference>
<dbReference type="RefSeq" id="YP_207220.1">
    <property type="nucleotide sequence ID" value="NC_002946.2"/>
</dbReference>
<dbReference type="SMR" id="Q5FAH9"/>
<dbReference type="STRING" id="242231.NGO_0040"/>
<dbReference type="GeneID" id="66752304"/>
<dbReference type="KEGG" id="ngo:NGO_0040"/>
<dbReference type="PATRIC" id="fig|242231.10.peg.42"/>
<dbReference type="HOGENOM" id="CLU_016922_1_5_4"/>
<dbReference type="UniPathway" id="UPA00251">
    <property type="reaction ID" value="UER00317"/>
</dbReference>
<dbReference type="Proteomes" id="UP000000535">
    <property type="component" value="Chromosome"/>
</dbReference>
<dbReference type="GO" id="GO:0005737">
    <property type="term" value="C:cytoplasm"/>
    <property type="evidence" value="ECO:0007669"/>
    <property type="project" value="UniProtKB-SubCell"/>
</dbReference>
<dbReference type="GO" id="GO:0042286">
    <property type="term" value="F:glutamate-1-semialdehyde 2,1-aminomutase activity"/>
    <property type="evidence" value="ECO:0007669"/>
    <property type="project" value="UniProtKB-UniRule"/>
</dbReference>
<dbReference type="GO" id="GO:0030170">
    <property type="term" value="F:pyridoxal phosphate binding"/>
    <property type="evidence" value="ECO:0007669"/>
    <property type="project" value="InterPro"/>
</dbReference>
<dbReference type="GO" id="GO:0008483">
    <property type="term" value="F:transaminase activity"/>
    <property type="evidence" value="ECO:0007669"/>
    <property type="project" value="InterPro"/>
</dbReference>
<dbReference type="GO" id="GO:0006782">
    <property type="term" value="P:protoporphyrinogen IX biosynthetic process"/>
    <property type="evidence" value="ECO:0007669"/>
    <property type="project" value="UniProtKB-UniRule"/>
</dbReference>
<dbReference type="CDD" id="cd00610">
    <property type="entry name" value="OAT_like"/>
    <property type="match status" value="1"/>
</dbReference>
<dbReference type="FunFam" id="3.40.640.10:FF:000021">
    <property type="entry name" value="Glutamate-1-semialdehyde 2,1-aminomutase"/>
    <property type="match status" value="1"/>
</dbReference>
<dbReference type="Gene3D" id="3.90.1150.10">
    <property type="entry name" value="Aspartate Aminotransferase, domain 1"/>
    <property type="match status" value="1"/>
</dbReference>
<dbReference type="Gene3D" id="3.40.640.10">
    <property type="entry name" value="Type I PLP-dependent aspartate aminotransferase-like (Major domain)"/>
    <property type="match status" value="1"/>
</dbReference>
<dbReference type="HAMAP" id="MF_00375">
    <property type="entry name" value="HemL_aminotrans_3"/>
    <property type="match status" value="1"/>
</dbReference>
<dbReference type="InterPro" id="IPR004639">
    <property type="entry name" value="4pyrrol_synth_GluAld_NH2Trfase"/>
</dbReference>
<dbReference type="InterPro" id="IPR005814">
    <property type="entry name" value="Aminotrans_3"/>
</dbReference>
<dbReference type="InterPro" id="IPR049704">
    <property type="entry name" value="Aminotrans_3_PPA_site"/>
</dbReference>
<dbReference type="InterPro" id="IPR015424">
    <property type="entry name" value="PyrdxlP-dep_Trfase"/>
</dbReference>
<dbReference type="InterPro" id="IPR015421">
    <property type="entry name" value="PyrdxlP-dep_Trfase_major"/>
</dbReference>
<dbReference type="InterPro" id="IPR015422">
    <property type="entry name" value="PyrdxlP-dep_Trfase_small"/>
</dbReference>
<dbReference type="NCBIfam" id="TIGR00713">
    <property type="entry name" value="hemL"/>
    <property type="match status" value="1"/>
</dbReference>
<dbReference type="NCBIfam" id="NF000818">
    <property type="entry name" value="PRK00062.1"/>
    <property type="match status" value="1"/>
</dbReference>
<dbReference type="PANTHER" id="PTHR43713">
    <property type="entry name" value="GLUTAMATE-1-SEMIALDEHYDE 2,1-AMINOMUTASE"/>
    <property type="match status" value="1"/>
</dbReference>
<dbReference type="PANTHER" id="PTHR43713:SF3">
    <property type="entry name" value="GLUTAMATE-1-SEMIALDEHYDE 2,1-AMINOMUTASE 1, CHLOROPLASTIC-RELATED"/>
    <property type="match status" value="1"/>
</dbReference>
<dbReference type="Pfam" id="PF00202">
    <property type="entry name" value="Aminotran_3"/>
    <property type="match status" value="1"/>
</dbReference>
<dbReference type="SUPFAM" id="SSF53383">
    <property type="entry name" value="PLP-dependent transferases"/>
    <property type="match status" value="1"/>
</dbReference>
<dbReference type="PROSITE" id="PS00600">
    <property type="entry name" value="AA_TRANSFER_CLASS_3"/>
    <property type="match status" value="1"/>
</dbReference>
<organism>
    <name type="scientific">Neisseria gonorrhoeae (strain ATCC 700825 / FA 1090)</name>
    <dbReference type="NCBI Taxonomy" id="242231"/>
    <lineage>
        <taxon>Bacteria</taxon>
        <taxon>Pseudomonadati</taxon>
        <taxon>Pseudomonadota</taxon>
        <taxon>Betaproteobacteria</taxon>
        <taxon>Neisseriales</taxon>
        <taxon>Neisseriaceae</taxon>
        <taxon>Neisseria</taxon>
    </lineage>
</organism>
<reference key="1">
    <citation type="submission" date="2003-03" db="EMBL/GenBank/DDBJ databases">
        <title>The complete genome sequence of Neisseria gonorrhoeae.</title>
        <authorList>
            <person name="Lewis L.A."/>
            <person name="Gillaspy A.F."/>
            <person name="McLaughlin R.E."/>
            <person name="Gipson M."/>
            <person name="Ducey T.F."/>
            <person name="Ownbey T."/>
            <person name="Hartman K."/>
            <person name="Nydick C."/>
            <person name="Carson M.B."/>
            <person name="Vaughn J."/>
            <person name="Thomson C."/>
            <person name="Song L."/>
            <person name="Lin S."/>
            <person name="Yuan X."/>
            <person name="Najar F."/>
            <person name="Zhan M."/>
            <person name="Ren Q."/>
            <person name="Zhu H."/>
            <person name="Qi S."/>
            <person name="Kenton S.M."/>
            <person name="Lai H."/>
            <person name="White J.D."/>
            <person name="Clifton S."/>
            <person name="Roe B.A."/>
            <person name="Dyer D.W."/>
        </authorList>
    </citation>
    <scope>NUCLEOTIDE SEQUENCE [LARGE SCALE GENOMIC DNA]</scope>
    <source>
        <strain>ATCC 700825 / FA 1090</strain>
    </source>
</reference>
<evidence type="ECO:0000255" key="1">
    <source>
        <dbReference type="HAMAP-Rule" id="MF_00375"/>
    </source>
</evidence>
<comment type="catalytic activity">
    <reaction evidence="1">
        <text>(S)-4-amino-5-oxopentanoate = 5-aminolevulinate</text>
        <dbReference type="Rhea" id="RHEA:14265"/>
        <dbReference type="ChEBI" id="CHEBI:57501"/>
        <dbReference type="ChEBI" id="CHEBI:356416"/>
        <dbReference type="EC" id="5.4.3.8"/>
    </reaction>
</comment>
<comment type="cofactor">
    <cofactor evidence="1">
        <name>pyridoxal 5'-phosphate</name>
        <dbReference type="ChEBI" id="CHEBI:597326"/>
    </cofactor>
</comment>
<comment type="pathway">
    <text evidence="1">Porphyrin-containing compound metabolism; protoporphyrin-IX biosynthesis; 5-aminolevulinate from L-glutamyl-tRNA(Glu): step 2/2.</text>
</comment>
<comment type="subunit">
    <text evidence="1">Homodimer.</text>
</comment>
<comment type="subcellular location">
    <subcellularLocation>
        <location evidence="1">Cytoplasm</location>
    </subcellularLocation>
</comment>
<comment type="similarity">
    <text evidence="1">Belongs to the class-III pyridoxal-phosphate-dependent aminotransferase family. HemL subfamily.</text>
</comment>
<sequence>MNRNEILFDRAKAIIPGGVNSPVRAFGSVGGVPRFIKKAEGAYVWDENGTRYTDYVGSWGPAIVGHAHPEVVEAVREAALGGLSFGAPTEGEIAIAEQIAEIMPSVERLRLVSSGTEATMTAIRLARGFTGRDKIIKFEGCYHGHSDSLLVKAGSGLLTFGNPSSAGVPADFTKHTLVLEYNNIAQLEEAFAQSGDEIACVIVEPFVGNMNLVRPTEAFVKALRGLTEKHGAVLIYDEVMTGFRVALGGAQSLHGITPDLTTMGKVIGGGMPLAAFGGRKDIMECISPLGGVYQAGTLSGNPIAVAAGLKTLEIIQREGFYENLTALTQRLANGIAAAKAHGIEFAADSVGGMFGLYFAAHVPRNYADMARSNIDAFKRFFHGMLDRGIAFGPSAYEAGFVSAAHTPELIDETVAVAVEVFKAMAA</sequence>
<keyword id="KW-0963">Cytoplasm</keyword>
<keyword id="KW-0413">Isomerase</keyword>
<keyword id="KW-0627">Porphyrin biosynthesis</keyword>
<keyword id="KW-0663">Pyridoxal phosphate</keyword>
<keyword id="KW-1185">Reference proteome</keyword>
<feature type="chain" id="PRO_0000120426" description="Glutamate-1-semialdehyde 2,1-aminomutase">
    <location>
        <begin position="1"/>
        <end position="426"/>
    </location>
</feature>
<feature type="modified residue" description="N6-(pyridoxal phosphate)lysine" evidence="1">
    <location>
        <position position="265"/>
    </location>
</feature>
<accession>Q5FAH9</accession>